<protein>
    <recommendedName>
        <fullName>Senecionine N-oxygenase</fullName>
        <shortName>SNO</shortName>
        <ecNumber>1.14.13.101</ecNumber>
    </recommendedName>
</protein>
<organism>
    <name type="scientific">Tyria jacobaeae</name>
    <name type="common">Cinnabar moth</name>
    <dbReference type="NCBI Taxonomy" id="179666"/>
    <lineage>
        <taxon>Eukaryota</taxon>
        <taxon>Metazoa</taxon>
        <taxon>Ecdysozoa</taxon>
        <taxon>Arthropoda</taxon>
        <taxon>Hexapoda</taxon>
        <taxon>Insecta</taxon>
        <taxon>Pterygota</taxon>
        <taxon>Neoptera</taxon>
        <taxon>Endopterygota</taxon>
        <taxon>Lepidoptera</taxon>
        <taxon>Glossata</taxon>
        <taxon>Ditrysia</taxon>
        <taxon>Noctuoidea</taxon>
        <taxon>Erebidae</taxon>
        <taxon>Arctiinae</taxon>
        <taxon>Callimorphini</taxon>
        <taxon>Tyria</taxon>
    </lineage>
</organism>
<sequence length="456" mass="52232">MFRKFVIMLVLSLLVAAGISQASSASRVCIIGAGYSGLATARYLQDYGLNYTIFEATPNIGGTWRYDPRVGTDEDGIPIYSSNYKNLRVNSPVDLMTYHGYEFQEGTRSFISGNCFYKYMKSFVRHFGLMENIQVRSLVTWVQRTEDKWNLTYMKTDTRKNYTEECDFVVVASGEFSTPKIPHIKGQEEYKGKTMHSHDYKEAESFRGQRVLVIGAGPSGLDVVMQLSNITSKLVHSQHILKSWHIFNQPDFPGNFISKPNVKHFTANGAVFEDDTVEEFDMVIYCTGFYYNHPFLSTLSSGITATENYVMPLYQQVVNINQPTMTFVGICKPFFAKLLDQQAHYSAKLAAGHFKLPSQDKMLRHWLEHVQMLREAQFKITDVNSVGPNVDEYFKALHKEAGVPLLPPVYASVFVFSGKTLLEDLQNYREYDYRIISDTQFKKKYNPREEVCPYDD</sequence>
<comment type="function">
    <text evidence="3">NADPH-dependent monooxygenase that detoxifies senecionine and similar plant alkaloids that are ingested by the larvae. Is active towards a narrow range of related substrates with highest activity towards senecionine, followed by seneciphylline, retrorsine, monocrotaline, senecivernine, axillarine and axillaridine.</text>
</comment>
<comment type="catalytic activity">
    <reaction evidence="2 3">
        <text>senecionine + NADPH + O2 = senecionine N-oxide + NADP(+) + H2O</text>
        <dbReference type="Rhea" id="RHEA:11420"/>
        <dbReference type="ChEBI" id="CHEBI:15377"/>
        <dbReference type="ChEBI" id="CHEBI:15379"/>
        <dbReference type="ChEBI" id="CHEBI:52070"/>
        <dbReference type="ChEBI" id="CHEBI:57783"/>
        <dbReference type="ChEBI" id="CHEBI:58349"/>
        <dbReference type="ChEBI" id="CHEBI:77617"/>
        <dbReference type="EC" id="1.14.13.101"/>
    </reaction>
</comment>
<comment type="cofactor">
    <cofactor evidence="2 3">
        <name>FAD</name>
        <dbReference type="ChEBI" id="CHEBI:57692"/>
    </cofactor>
</comment>
<comment type="biophysicochemical properties">
    <absorption>
        <max evidence="3">456 nm</max>
    </absorption>
    <kinetics>
        <KM evidence="3">1.4 uM for senecionine</KM>
        <KM evidence="3">1.3 uM for NADPH</KM>
        <KM evidence="3">12.5 uM for monocrotaline</KM>
    </kinetics>
    <phDependence>
        <text evidence="3">Optimum pH is 7.0.</text>
    </phDependence>
    <temperatureDependence>
        <text evidence="3">Optimum temperature is 40-45 degrees Celsius.</text>
    </temperatureDependence>
</comment>
<comment type="subunit">
    <text evidence="3">Homotetramer.</text>
</comment>
<comment type="subcellular location">
    <subcellularLocation>
        <location evidence="4">Secreted</location>
    </subcellularLocation>
</comment>
<comment type="tissue specificity">
    <text evidence="3">Hemolymph.</text>
</comment>
<comment type="miscellaneous">
    <text evidence="5">Larvae store pyrrolizidine alkaloids from their host plant S.jacobaeae as non-toxic N-oxides. This serves as protection against insectivores; after ingestion of the larvae, the N-oxides are reduced in the gut of the insectivores to form toxic alkaloids (PubMed:11972041).</text>
</comment>
<comment type="similarity">
    <text evidence="4">Belongs to the FMO family.</text>
</comment>
<name>SNO1_TYRJA</name>
<feature type="signal peptide" evidence="2">
    <location>
        <begin position="1"/>
        <end position="22"/>
    </location>
</feature>
<feature type="chain" id="PRO_5000068127" description="Senecionine N-oxygenase">
    <location>
        <begin position="23"/>
        <end position="456"/>
    </location>
</feature>
<feature type="binding site" evidence="1">
    <location>
        <begin position="32"/>
        <end position="37"/>
    </location>
    <ligand>
        <name>FAD</name>
        <dbReference type="ChEBI" id="CHEBI:57692"/>
    </ligand>
</feature>
<feature type="binding site" evidence="1">
    <location>
        <begin position="215"/>
        <end position="220"/>
    </location>
    <ligand>
        <name>NADP(+)</name>
        <dbReference type="ChEBI" id="CHEBI:58349"/>
    </ligand>
</feature>
<keyword id="KW-0903">Direct protein sequencing</keyword>
<keyword id="KW-0274">FAD</keyword>
<keyword id="KW-0285">Flavoprotein</keyword>
<keyword id="KW-0503">Monooxygenase</keyword>
<keyword id="KW-0521">NADP</keyword>
<keyword id="KW-0560">Oxidoreductase</keyword>
<keyword id="KW-0964">Secreted</keyword>
<keyword id="KW-0732">Signal</keyword>
<dbReference type="EC" id="1.14.13.101"/>
<dbReference type="EMBL" id="AJ420233">
    <property type="protein sequence ID" value="CAD12369.1"/>
    <property type="molecule type" value="mRNA"/>
</dbReference>
<dbReference type="SMR" id="Q8MP06"/>
<dbReference type="KEGG" id="ag:CAD12369"/>
<dbReference type="OrthoDB" id="66881at2759"/>
<dbReference type="BioCyc" id="MetaCyc:MONOMER-16767"/>
<dbReference type="BRENDA" id="1.14.13.101">
    <property type="organism ID" value="6769"/>
</dbReference>
<dbReference type="GO" id="GO:0005576">
    <property type="term" value="C:extracellular region"/>
    <property type="evidence" value="ECO:0007669"/>
    <property type="project" value="UniProtKB-SubCell"/>
</dbReference>
<dbReference type="GO" id="GO:0050660">
    <property type="term" value="F:flavin adenine dinucleotide binding"/>
    <property type="evidence" value="ECO:0000314"/>
    <property type="project" value="UniProtKB"/>
</dbReference>
<dbReference type="GO" id="GO:0004499">
    <property type="term" value="F:N,N-dimethylaniline monooxygenase activity"/>
    <property type="evidence" value="ECO:0007669"/>
    <property type="project" value="InterPro"/>
</dbReference>
<dbReference type="GO" id="GO:0050661">
    <property type="term" value="F:NADP binding"/>
    <property type="evidence" value="ECO:0007669"/>
    <property type="project" value="InterPro"/>
</dbReference>
<dbReference type="GO" id="GO:0033784">
    <property type="term" value="F:senecionine N-oxygenase activity"/>
    <property type="evidence" value="ECO:0000314"/>
    <property type="project" value="UniProtKB"/>
</dbReference>
<dbReference type="GO" id="GO:0009820">
    <property type="term" value="P:alkaloid metabolic process"/>
    <property type="evidence" value="ECO:0000314"/>
    <property type="project" value="UniProtKB"/>
</dbReference>
<dbReference type="GO" id="GO:0051289">
    <property type="term" value="P:protein homotetramerization"/>
    <property type="evidence" value="ECO:0000314"/>
    <property type="project" value="UniProtKB"/>
</dbReference>
<dbReference type="FunFam" id="3.50.50.60:FF:000138">
    <property type="entry name" value="Flavin-containing monooxygenase"/>
    <property type="match status" value="1"/>
</dbReference>
<dbReference type="Gene3D" id="3.50.50.60">
    <property type="entry name" value="FAD/NAD(P)-binding domain"/>
    <property type="match status" value="2"/>
</dbReference>
<dbReference type="InterPro" id="IPR036188">
    <property type="entry name" value="FAD/NAD-bd_sf"/>
</dbReference>
<dbReference type="InterPro" id="IPR000960">
    <property type="entry name" value="Flavin_mOase"/>
</dbReference>
<dbReference type="InterPro" id="IPR020946">
    <property type="entry name" value="Flavin_mOase-like"/>
</dbReference>
<dbReference type="InterPro" id="IPR050346">
    <property type="entry name" value="FMO-like"/>
</dbReference>
<dbReference type="PANTHER" id="PTHR23023">
    <property type="entry name" value="DIMETHYLANILINE MONOOXYGENASE"/>
    <property type="match status" value="1"/>
</dbReference>
<dbReference type="Pfam" id="PF00743">
    <property type="entry name" value="FMO-like"/>
    <property type="match status" value="2"/>
</dbReference>
<dbReference type="PRINTS" id="PR00370">
    <property type="entry name" value="FMOXYGENASE"/>
</dbReference>
<dbReference type="SUPFAM" id="SSF51905">
    <property type="entry name" value="FAD/NAD(P)-binding domain"/>
    <property type="match status" value="2"/>
</dbReference>
<evidence type="ECO:0000255" key="1"/>
<evidence type="ECO:0000269" key="2">
    <source>
    </source>
</evidence>
<evidence type="ECO:0000269" key="3">
    <source>
    </source>
</evidence>
<evidence type="ECO:0000305" key="4"/>
<evidence type="ECO:0000305" key="5">
    <source>
    </source>
</evidence>
<reference key="1">
    <citation type="journal article" date="2002" name="Proc. Natl. Acad. Sci. U.S.A.">
        <title>Evolutionary recruitment of a flavin-dependent monooxygenase for the detoxification of host plant-acquired pyrrolizidine alkaloids in the alkaloid-defended arctiid moth Tyria jacobaeae.</title>
        <authorList>
            <person name="Naumann C."/>
            <person name="Hartmann T."/>
            <person name="Ober D."/>
        </authorList>
    </citation>
    <scope>NUCLEOTIDE SEQUENCE [MRNA]</scope>
    <scope>PROTEIN SEQUENCE OF 23-60; 70-85 AND 365-374</scope>
    <scope>CATALYTIC ACTIVITY</scope>
    <scope>COFACTOR</scope>
    <source>
        <tissue>Larva</tissue>
    </source>
</reference>
<reference key="2">
    <citation type="journal article" date="1997" name="Eur. J. Biochem.">
        <title>The two facies of pyrrolizidine alkaloids: the role of the tertiary amine and its N-oxide in chemical defense of insects with acquired plant alkaloids.</title>
        <authorList>
            <person name="Lindigkeit R."/>
            <person name="Biller A."/>
            <person name="Buch M."/>
            <person name="Schiebel H.M."/>
            <person name="Boppre M."/>
            <person name="Hartmann T."/>
        </authorList>
    </citation>
    <scope>CATALYTIC ACTIVITY</scope>
    <scope>FUNCTION</scope>
    <scope>COFACTOR</scope>
    <scope>SUBUNIT</scope>
    <scope>TISSUE SPECIFICITY</scope>
    <scope>BIOPHYSICOCHEMICAL PROPERTIES</scope>
</reference>
<accession>Q8MP06</accession>
<gene>
    <name type="primary">sno1</name>
</gene>
<proteinExistence type="evidence at protein level"/>